<dbReference type="EC" id="2.1.1.190" evidence="2"/>
<dbReference type="EMBL" id="AL513382">
    <property type="protein sequence ID" value="CAD06071.1"/>
    <property type="molecule type" value="Genomic_DNA"/>
</dbReference>
<dbReference type="EMBL" id="AE014613">
    <property type="protein sequence ID" value="AAO70422.1"/>
    <property type="molecule type" value="Genomic_DNA"/>
</dbReference>
<dbReference type="RefSeq" id="NP_457353.1">
    <property type="nucleotide sequence ID" value="NC_003198.1"/>
</dbReference>
<dbReference type="RefSeq" id="WP_000046844.1">
    <property type="nucleotide sequence ID" value="NZ_WSUR01000005.1"/>
</dbReference>
<dbReference type="SMR" id="Q8Z446"/>
<dbReference type="STRING" id="220341.gene:17586981"/>
<dbReference type="KEGG" id="stt:t2866"/>
<dbReference type="KEGG" id="sty:STY3095"/>
<dbReference type="PATRIC" id="fig|220341.7.peg.3150"/>
<dbReference type="eggNOG" id="COG2265">
    <property type="taxonomic scope" value="Bacteria"/>
</dbReference>
<dbReference type="HOGENOM" id="CLU_014689_8_2_6"/>
<dbReference type="OMA" id="GGCKWQH"/>
<dbReference type="OrthoDB" id="9804590at2"/>
<dbReference type="Proteomes" id="UP000000541">
    <property type="component" value="Chromosome"/>
</dbReference>
<dbReference type="Proteomes" id="UP000002670">
    <property type="component" value="Chromosome"/>
</dbReference>
<dbReference type="GO" id="GO:0051539">
    <property type="term" value="F:4 iron, 4 sulfur cluster binding"/>
    <property type="evidence" value="ECO:0007669"/>
    <property type="project" value="UniProtKB-KW"/>
</dbReference>
<dbReference type="GO" id="GO:0005506">
    <property type="term" value="F:iron ion binding"/>
    <property type="evidence" value="ECO:0007669"/>
    <property type="project" value="UniProtKB-UniRule"/>
</dbReference>
<dbReference type="GO" id="GO:0003723">
    <property type="term" value="F:RNA binding"/>
    <property type="evidence" value="ECO:0007669"/>
    <property type="project" value="InterPro"/>
</dbReference>
<dbReference type="GO" id="GO:0070041">
    <property type="term" value="F:rRNA (uridine-C5-)-methyltransferase activity"/>
    <property type="evidence" value="ECO:0007669"/>
    <property type="project" value="UniProtKB-UniRule"/>
</dbReference>
<dbReference type="GO" id="GO:0070475">
    <property type="term" value="P:rRNA base methylation"/>
    <property type="evidence" value="ECO:0007669"/>
    <property type="project" value="TreeGrafter"/>
</dbReference>
<dbReference type="CDD" id="cd02440">
    <property type="entry name" value="AdoMet_MTases"/>
    <property type="match status" value="1"/>
</dbReference>
<dbReference type="FunFam" id="3.40.50.150:FF:000009">
    <property type="entry name" value="23S rRNA (Uracil(1939)-C(5))-methyltransferase RlmD"/>
    <property type="match status" value="1"/>
</dbReference>
<dbReference type="FunFam" id="2.40.50.1070:FF:000004">
    <property type="entry name" value="23S rRNA (uracil(1939)-C(5))-methyltransferase RlmD"/>
    <property type="match status" value="1"/>
</dbReference>
<dbReference type="FunFam" id="2.40.50.140:FF:000097">
    <property type="entry name" value="23S rRNA (uracil(1939)-C(5))-methyltransferase RlmD"/>
    <property type="match status" value="1"/>
</dbReference>
<dbReference type="Gene3D" id="2.40.50.1070">
    <property type="match status" value="1"/>
</dbReference>
<dbReference type="Gene3D" id="2.40.50.140">
    <property type="entry name" value="Nucleic acid-binding proteins"/>
    <property type="match status" value="1"/>
</dbReference>
<dbReference type="Gene3D" id="3.40.50.150">
    <property type="entry name" value="Vaccinia Virus protein VP39"/>
    <property type="match status" value="1"/>
</dbReference>
<dbReference type="HAMAP" id="MF_01010">
    <property type="entry name" value="23SrRNA_methyltr_RlmD"/>
    <property type="match status" value="1"/>
</dbReference>
<dbReference type="InterPro" id="IPR001566">
    <property type="entry name" value="23S_rRNA_MeTrfase_RlmD"/>
</dbReference>
<dbReference type="InterPro" id="IPR030390">
    <property type="entry name" value="MeTrfase_TrmA_AS"/>
</dbReference>
<dbReference type="InterPro" id="IPR030391">
    <property type="entry name" value="MeTrfase_TrmA_CS"/>
</dbReference>
<dbReference type="InterPro" id="IPR012340">
    <property type="entry name" value="NA-bd_OB-fold"/>
</dbReference>
<dbReference type="InterPro" id="IPR029063">
    <property type="entry name" value="SAM-dependent_MTases_sf"/>
</dbReference>
<dbReference type="InterPro" id="IPR002792">
    <property type="entry name" value="TRAM_dom"/>
</dbReference>
<dbReference type="InterPro" id="IPR010280">
    <property type="entry name" value="U5_MeTrfase_fam"/>
</dbReference>
<dbReference type="NCBIfam" id="NF009639">
    <property type="entry name" value="PRK13168.1"/>
    <property type="match status" value="1"/>
</dbReference>
<dbReference type="NCBIfam" id="TIGR00479">
    <property type="entry name" value="rumA"/>
    <property type="match status" value="1"/>
</dbReference>
<dbReference type="PANTHER" id="PTHR11061:SF49">
    <property type="entry name" value="23S RRNA (URACIL(1939)-C(5))-METHYLTRANSFERASE RLMD"/>
    <property type="match status" value="1"/>
</dbReference>
<dbReference type="PANTHER" id="PTHR11061">
    <property type="entry name" value="RNA M5U METHYLTRANSFERASE"/>
    <property type="match status" value="1"/>
</dbReference>
<dbReference type="Pfam" id="PF01938">
    <property type="entry name" value="TRAM"/>
    <property type="match status" value="1"/>
</dbReference>
<dbReference type="Pfam" id="PF05958">
    <property type="entry name" value="tRNA_U5-meth_tr"/>
    <property type="match status" value="1"/>
</dbReference>
<dbReference type="SUPFAM" id="SSF50249">
    <property type="entry name" value="Nucleic acid-binding proteins"/>
    <property type="match status" value="1"/>
</dbReference>
<dbReference type="SUPFAM" id="SSF53335">
    <property type="entry name" value="S-adenosyl-L-methionine-dependent methyltransferases"/>
    <property type="match status" value="1"/>
</dbReference>
<dbReference type="PROSITE" id="PS51687">
    <property type="entry name" value="SAM_MT_RNA_M5U"/>
    <property type="match status" value="1"/>
</dbReference>
<dbReference type="PROSITE" id="PS50926">
    <property type="entry name" value="TRAM"/>
    <property type="match status" value="1"/>
</dbReference>
<dbReference type="PROSITE" id="PS01230">
    <property type="entry name" value="TRMA_1"/>
    <property type="match status" value="1"/>
</dbReference>
<dbReference type="PROSITE" id="PS01231">
    <property type="entry name" value="TRMA_2"/>
    <property type="match status" value="1"/>
</dbReference>
<reference key="1">
    <citation type="journal article" date="2001" name="Nature">
        <title>Complete genome sequence of a multiple drug resistant Salmonella enterica serovar Typhi CT18.</title>
        <authorList>
            <person name="Parkhill J."/>
            <person name="Dougan G."/>
            <person name="James K.D."/>
            <person name="Thomson N.R."/>
            <person name="Pickard D."/>
            <person name="Wain J."/>
            <person name="Churcher C.M."/>
            <person name="Mungall K.L."/>
            <person name="Bentley S.D."/>
            <person name="Holden M.T.G."/>
            <person name="Sebaihia M."/>
            <person name="Baker S."/>
            <person name="Basham D."/>
            <person name="Brooks K."/>
            <person name="Chillingworth T."/>
            <person name="Connerton P."/>
            <person name="Cronin A."/>
            <person name="Davis P."/>
            <person name="Davies R.M."/>
            <person name="Dowd L."/>
            <person name="White N."/>
            <person name="Farrar J."/>
            <person name="Feltwell T."/>
            <person name="Hamlin N."/>
            <person name="Haque A."/>
            <person name="Hien T.T."/>
            <person name="Holroyd S."/>
            <person name="Jagels K."/>
            <person name="Krogh A."/>
            <person name="Larsen T.S."/>
            <person name="Leather S."/>
            <person name="Moule S."/>
            <person name="O'Gaora P."/>
            <person name="Parry C."/>
            <person name="Quail M.A."/>
            <person name="Rutherford K.M."/>
            <person name="Simmonds M."/>
            <person name="Skelton J."/>
            <person name="Stevens K."/>
            <person name="Whitehead S."/>
            <person name="Barrell B.G."/>
        </authorList>
    </citation>
    <scope>NUCLEOTIDE SEQUENCE [LARGE SCALE GENOMIC DNA]</scope>
    <source>
        <strain>CT18</strain>
    </source>
</reference>
<reference key="2">
    <citation type="journal article" date="2003" name="J. Bacteriol.">
        <title>Comparative genomics of Salmonella enterica serovar Typhi strains Ty2 and CT18.</title>
        <authorList>
            <person name="Deng W."/>
            <person name="Liou S.-R."/>
            <person name="Plunkett G. III"/>
            <person name="Mayhew G.F."/>
            <person name="Rose D.J."/>
            <person name="Burland V."/>
            <person name="Kodoyianni V."/>
            <person name="Schwartz D.C."/>
            <person name="Blattner F.R."/>
        </authorList>
    </citation>
    <scope>NUCLEOTIDE SEQUENCE [LARGE SCALE GENOMIC DNA]</scope>
    <source>
        <strain>ATCC 700931 / Ty2</strain>
    </source>
</reference>
<feature type="initiator methionine" description="Removed" evidence="1">
    <location>
        <position position="1"/>
    </location>
</feature>
<feature type="chain" id="PRO_0000161912" description="23S rRNA (uracil(1939)-C(5))-methyltransferase RlmD">
    <location>
        <begin position="2"/>
        <end position="431"/>
    </location>
</feature>
<feature type="domain" description="TRAM" evidence="2">
    <location>
        <begin position="10"/>
        <end position="68"/>
    </location>
</feature>
<feature type="active site" description="Nucleophile" evidence="2">
    <location>
        <position position="388"/>
    </location>
</feature>
<feature type="binding site" evidence="2">
    <location>
        <position position="81"/>
    </location>
    <ligand>
        <name>[4Fe-4S] cluster</name>
        <dbReference type="ChEBI" id="CHEBI:49883"/>
    </ligand>
</feature>
<feature type="binding site" evidence="2">
    <location>
        <position position="87"/>
    </location>
    <ligand>
        <name>[4Fe-4S] cluster</name>
        <dbReference type="ChEBI" id="CHEBI:49883"/>
    </ligand>
</feature>
<feature type="binding site" evidence="2">
    <location>
        <position position="90"/>
    </location>
    <ligand>
        <name>[4Fe-4S] cluster</name>
        <dbReference type="ChEBI" id="CHEBI:49883"/>
    </ligand>
</feature>
<feature type="binding site" evidence="2">
    <location>
        <position position="161"/>
    </location>
    <ligand>
        <name>[4Fe-4S] cluster</name>
        <dbReference type="ChEBI" id="CHEBI:49883"/>
    </ligand>
</feature>
<feature type="binding site" evidence="2">
    <location>
        <position position="264"/>
    </location>
    <ligand>
        <name>S-adenosyl-L-methionine</name>
        <dbReference type="ChEBI" id="CHEBI:59789"/>
    </ligand>
</feature>
<feature type="binding site" evidence="2">
    <location>
        <position position="293"/>
    </location>
    <ligand>
        <name>S-adenosyl-L-methionine</name>
        <dbReference type="ChEBI" id="CHEBI:59789"/>
    </ligand>
</feature>
<feature type="binding site" evidence="2">
    <location>
        <position position="298"/>
    </location>
    <ligand>
        <name>S-adenosyl-L-methionine</name>
        <dbReference type="ChEBI" id="CHEBI:59789"/>
    </ligand>
</feature>
<feature type="binding site" evidence="2">
    <location>
        <position position="314"/>
    </location>
    <ligand>
        <name>S-adenosyl-L-methionine</name>
        <dbReference type="ChEBI" id="CHEBI:59789"/>
    </ligand>
</feature>
<feature type="binding site" evidence="2">
    <location>
        <position position="341"/>
    </location>
    <ligand>
        <name>S-adenosyl-L-methionine</name>
        <dbReference type="ChEBI" id="CHEBI:59789"/>
    </ligand>
</feature>
<feature type="binding site" evidence="2">
    <location>
        <position position="362"/>
    </location>
    <ligand>
        <name>S-adenosyl-L-methionine</name>
        <dbReference type="ChEBI" id="CHEBI:59789"/>
    </ligand>
</feature>
<protein>
    <recommendedName>
        <fullName evidence="2">23S rRNA (uracil(1939)-C(5))-methyltransferase RlmD</fullName>
        <ecNumber evidence="2">2.1.1.190</ecNumber>
    </recommendedName>
    <alternativeName>
        <fullName evidence="2">23S rRNA(m5U1939)-methyltransferase</fullName>
    </alternativeName>
</protein>
<proteinExistence type="inferred from homology"/>
<gene>
    <name evidence="2" type="primary">rlmD</name>
    <name type="synonym">rumA</name>
    <name type="ordered locus">STY3095</name>
    <name type="ordered locus">t2866</name>
</gene>
<keyword id="KW-0004">4Fe-4S</keyword>
<keyword id="KW-0408">Iron</keyword>
<keyword id="KW-0411">Iron-sulfur</keyword>
<keyword id="KW-0479">Metal-binding</keyword>
<keyword id="KW-0489">Methyltransferase</keyword>
<keyword id="KW-0698">rRNA processing</keyword>
<keyword id="KW-0949">S-adenosyl-L-methionine</keyword>
<keyword id="KW-0808">Transferase</keyword>
<name>RLMD_SALTI</name>
<accession>Q8Z446</accession>
<organism>
    <name type="scientific">Salmonella typhi</name>
    <dbReference type="NCBI Taxonomy" id="90370"/>
    <lineage>
        <taxon>Bacteria</taxon>
        <taxon>Pseudomonadati</taxon>
        <taxon>Pseudomonadota</taxon>
        <taxon>Gammaproteobacteria</taxon>
        <taxon>Enterobacterales</taxon>
        <taxon>Enterobacteriaceae</taxon>
        <taxon>Salmonella</taxon>
    </lineage>
</organism>
<comment type="function">
    <text evidence="2">Catalyzes the formation of 5-methyl-uridine at position 1939 (m5U1939) in 23S rRNA.</text>
</comment>
<comment type="catalytic activity">
    <reaction evidence="2">
        <text>uridine(1939) in 23S rRNA + S-adenosyl-L-methionine = 5-methyluridine(1939) in 23S rRNA + S-adenosyl-L-homocysteine + H(+)</text>
        <dbReference type="Rhea" id="RHEA:42908"/>
        <dbReference type="Rhea" id="RHEA-COMP:10278"/>
        <dbReference type="Rhea" id="RHEA-COMP:10279"/>
        <dbReference type="ChEBI" id="CHEBI:15378"/>
        <dbReference type="ChEBI" id="CHEBI:57856"/>
        <dbReference type="ChEBI" id="CHEBI:59789"/>
        <dbReference type="ChEBI" id="CHEBI:65315"/>
        <dbReference type="ChEBI" id="CHEBI:74447"/>
        <dbReference type="EC" id="2.1.1.190"/>
    </reaction>
</comment>
<comment type="similarity">
    <text evidence="2">Belongs to the class I-like SAM-binding methyltransferase superfamily. RNA M5U methyltransferase family. RlmD subfamily.</text>
</comment>
<evidence type="ECO:0000250" key="1"/>
<evidence type="ECO:0000255" key="2">
    <source>
        <dbReference type="HAMAP-Rule" id="MF_01010"/>
    </source>
</evidence>
<sequence length="431" mass="47877">MAQFYSAKRRVTTRQIITVKVNDLDSFGQGVARHNGKALFIPGLLPEESAEVIITEDKKQFARARVSRRLNDSPERETPRCPHFGVCGGCQQQHVGIDLQQRSKSAALARLMKHEVNDIIAGASWGYRRRARLSLNCPPDKPLQMGFRKAGSSDIVNVEQCPVLAPQLEALLPRIRACLASLHGTRHLGHVELVQAGSGTLMILRHTAPLSAADKEKLERFSHSEGLSLFLAPFSEILETVSGEAPWYDSHGLRLTFSPRDFIQVNEAVNQQMVARALEWLDVRAEDRVLDLFCGMGNFTLPLATRAASVVGVEGVQALVEKGRENAIRNGLHNVTFFHENLEEDVTKQPWAKNGFDKVLLDPARAGATGVMRHIIKLKPIRIVYVSCNPATLARDSEALVNAGYEVTRLAMLDMFPHTGHLESMVLFERM</sequence>